<accession>O15218</accession>
<reference key="1">
    <citation type="journal article" date="1997" name="Biochem. Biophys. Res. Commun.">
        <title>Molecular cloning of a novel human receptor gene with homology to the rat adrenomedullin receptor and high expression in heart and immune system.</title>
        <authorList>
            <person name="Haenze J."/>
            <person name="Dittrich K."/>
            <person name="Dotsch J."/>
            <person name="Rascher W."/>
        </authorList>
    </citation>
    <scope>NUCLEOTIDE SEQUENCE [MRNA]</scope>
    <scope>TISSUE SPECIFICITY</scope>
</reference>
<reference key="2">
    <citation type="submission" date="2003-04" db="EMBL/GenBank/DDBJ databases">
        <title>cDNA clones of human proteins involved in signal transduction sequenced by the Guthrie cDNA resource center (www.cdna.org).</title>
        <authorList>
            <person name="Kopatz S.A."/>
            <person name="Aronstam R.S."/>
            <person name="Sharma S.V."/>
        </authorList>
    </citation>
    <scope>NUCLEOTIDE SEQUENCE [GENOMIC DNA]</scope>
</reference>
<reference key="3">
    <citation type="journal article" date="2004" name="Genome Res.">
        <title>The status, quality, and expansion of the NIH full-length cDNA project: the Mammalian Gene Collection (MGC).</title>
        <authorList>
            <consortium name="The MGC Project Team"/>
        </authorList>
    </citation>
    <scope>NUCLEOTIDE SEQUENCE [LARGE SCALE MRNA]</scope>
    <source>
        <tissue>Colon</tissue>
    </source>
</reference>
<reference key="4">
    <citation type="journal article" date="1998" name="Biochem. Biophys. Res. Commun.">
        <title>Expression of the rat adrenomedullin receptor or a putative human adrenomedullin receptor does not correlate with adrenomedullin binding or functional response.</title>
        <authorList>
            <person name="Kennedy S.P."/>
            <person name="Sun D."/>
            <person name="Oleynek J.J."/>
            <person name="Hoth C.F."/>
            <person name="Kong J."/>
            <person name="Hill R.J."/>
        </authorList>
    </citation>
    <scope>DOUBTS ON THE ORIGINAL FUNCTION</scope>
</reference>
<comment type="function">
    <text>Orphan receptor.</text>
</comment>
<comment type="subcellular location">
    <subcellularLocation>
        <location>Cell membrane</location>
        <topology>Multi-pass membrane protein</topology>
    </subcellularLocation>
</comment>
<comment type="tissue specificity">
    <text evidence="3">Highly expressed in heart, skeletal muscle, immune system, adrenal gland and liver.</text>
</comment>
<comment type="similarity">
    <text evidence="2">Belongs to the G-protein coupled receptor 1 family.</text>
</comment>
<comment type="caution">
    <text evidence="4">Was originally thought to be a receptor for adrenomedullin.</text>
</comment>
<organism>
    <name type="scientific">Homo sapiens</name>
    <name type="common">Human</name>
    <dbReference type="NCBI Taxonomy" id="9606"/>
    <lineage>
        <taxon>Eukaryota</taxon>
        <taxon>Metazoa</taxon>
        <taxon>Chordata</taxon>
        <taxon>Craniata</taxon>
        <taxon>Vertebrata</taxon>
        <taxon>Euteleostomi</taxon>
        <taxon>Mammalia</taxon>
        <taxon>Eutheria</taxon>
        <taxon>Euarchontoglires</taxon>
        <taxon>Primates</taxon>
        <taxon>Haplorrhini</taxon>
        <taxon>Catarrhini</taxon>
        <taxon>Hominidae</taxon>
        <taxon>Homo</taxon>
    </lineage>
</organism>
<dbReference type="EMBL" id="Y13583">
    <property type="protein sequence ID" value="CAA73910.1"/>
    <property type="molecule type" value="mRNA"/>
</dbReference>
<dbReference type="EMBL" id="AY268434">
    <property type="protein sequence ID" value="AAP23201.1"/>
    <property type="molecule type" value="Genomic_DNA"/>
</dbReference>
<dbReference type="EMBL" id="BC034761">
    <property type="protein sequence ID" value="AAH34761.1"/>
    <property type="molecule type" value="mRNA"/>
</dbReference>
<dbReference type="CCDS" id="CCDS8927.1"/>
<dbReference type="PIR" id="JC5784">
    <property type="entry name" value="JC5784"/>
</dbReference>
<dbReference type="RefSeq" id="NP_009195.1">
    <property type="nucleotide sequence ID" value="NM_007264.4"/>
</dbReference>
<dbReference type="RefSeq" id="XP_011536126.1">
    <property type="nucleotide sequence ID" value="XM_011537824.4"/>
</dbReference>
<dbReference type="RefSeq" id="XP_011536127.1">
    <property type="nucleotide sequence ID" value="XM_011537825.4"/>
</dbReference>
<dbReference type="RefSeq" id="XP_011536129.1">
    <property type="nucleotide sequence ID" value="XM_011537827.4"/>
</dbReference>
<dbReference type="RefSeq" id="XP_047284154.1">
    <property type="nucleotide sequence ID" value="XM_047428198.1"/>
</dbReference>
<dbReference type="RefSeq" id="XP_054226917.1">
    <property type="nucleotide sequence ID" value="XM_054370942.1"/>
</dbReference>
<dbReference type="RefSeq" id="XP_054226918.1">
    <property type="nucleotide sequence ID" value="XM_054370943.1"/>
</dbReference>
<dbReference type="RefSeq" id="XP_054226919.1">
    <property type="nucleotide sequence ID" value="XM_054370944.1"/>
</dbReference>
<dbReference type="SMR" id="O15218"/>
<dbReference type="BioGRID" id="116449">
    <property type="interactions" value="502"/>
</dbReference>
<dbReference type="FunCoup" id="O15218">
    <property type="interactions" value="383"/>
</dbReference>
<dbReference type="IntAct" id="O15218">
    <property type="interactions" value="454"/>
</dbReference>
<dbReference type="MINT" id="O15218"/>
<dbReference type="STRING" id="9606.ENSP00000300098"/>
<dbReference type="ChEMBL" id="CHEMBL4356"/>
<dbReference type="GlyCosmos" id="O15218">
    <property type="glycosylation" value="2 sites, No reported glycans"/>
</dbReference>
<dbReference type="GlyGen" id="O15218">
    <property type="glycosylation" value="3 sites"/>
</dbReference>
<dbReference type="PhosphoSitePlus" id="O15218"/>
<dbReference type="BioMuta" id="GPR182"/>
<dbReference type="MassIVE" id="O15218"/>
<dbReference type="PaxDb" id="9606-ENSP00000300098"/>
<dbReference type="PeptideAtlas" id="O15218"/>
<dbReference type="ProteomicsDB" id="48515"/>
<dbReference type="Antibodypedia" id="16024">
    <property type="antibodies" value="296 antibodies from 31 providers"/>
</dbReference>
<dbReference type="DNASU" id="11318"/>
<dbReference type="Ensembl" id="ENST00000300098.3">
    <property type="protein sequence ID" value="ENSP00000300098.1"/>
    <property type="gene ID" value="ENSG00000166856.3"/>
</dbReference>
<dbReference type="GeneID" id="11318"/>
<dbReference type="KEGG" id="hsa:11318"/>
<dbReference type="MANE-Select" id="ENST00000300098.3">
    <property type="protein sequence ID" value="ENSP00000300098.1"/>
    <property type="RefSeq nucleotide sequence ID" value="NM_007264.4"/>
    <property type="RefSeq protein sequence ID" value="NP_009195.1"/>
</dbReference>
<dbReference type="UCSC" id="uc001smk.4">
    <property type="organism name" value="human"/>
</dbReference>
<dbReference type="AGR" id="HGNC:13708"/>
<dbReference type="CTD" id="11318"/>
<dbReference type="DisGeNET" id="11318"/>
<dbReference type="GeneCards" id="GPR182"/>
<dbReference type="HGNC" id="HGNC:13708">
    <property type="gene designation" value="GPR182"/>
</dbReference>
<dbReference type="HPA" id="ENSG00000166856">
    <property type="expression patterns" value="Tissue enhanced (lymphoid tissue, testis)"/>
</dbReference>
<dbReference type="MIM" id="605307">
    <property type="type" value="gene"/>
</dbReference>
<dbReference type="neXtProt" id="NX_O15218"/>
<dbReference type="OpenTargets" id="ENSG00000166856"/>
<dbReference type="PharmGKB" id="PA162390165"/>
<dbReference type="VEuPathDB" id="HostDB:ENSG00000166856"/>
<dbReference type="eggNOG" id="ENOG502QSNU">
    <property type="taxonomic scope" value="Eukaryota"/>
</dbReference>
<dbReference type="GeneTree" id="ENSGT00940000154307"/>
<dbReference type="HOGENOM" id="CLU_009579_8_3_1"/>
<dbReference type="InParanoid" id="O15218"/>
<dbReference type="OMA" id="LYFFNHT"/>
<dbReference type="OrthoDB" id="5963140at2759"/>
<dbReference type="PAN-GO" id="O15218">
    <property type="GO annotations" value="0 GO annotations based on evolutionary models"/>
</dbReference>
<dbReference type="PhylomeDB" id="O15218"/>
<dbReference type="TreeFam" id="TF333489"/>
<dbReference type="PathwayCommons" id="O15218"/>
<dbReference type="SignaLink" id="O15218"/>
<dbReference type="BioGRID-ORCS" id="11318">
    <property type="hits" value="25 hits in 1147 CRISPR screens"/>
</dbReference>
<dbReference type="GeneWiki" id="GPR182"/>
<dbReference type="GenomeRNAi" id="11318"/>
<dbReference type="Pharos" id="O15218">
    <property type="development level" value="Tbio"/>
</dbReference>
<dbReference type="PRO" id="PR:O15218"/>
<dbReference type="Proteomes" id="UP000005640">
    <property type="component" value="Chromosome 12"/>
</dbReference>
<dbReference type="RNAct" id="O15218">
    <property type="molecule type" value="protein"/>
</dbReference>
<dbReference type="Bgee" id="ENSG00000166856">
    <property type="expression patterns" value="Expressed in male germ line stem cell (sensu Vertebrata) in testis and 98 other cell types or tissues"/>
</dbReference>
<dbReference type="ExpressionAtlas" id="O15218">
    <property type="expression patterns" value="baseline and differential"/>
</dbReference>
<dbReference type="GO" id="GO:0016020">
    <property type="term" value="C:membrane"/>
    <property type="evidence" value="ECO:0000304"/>
    <property type="project" value="ProtInc"/>
</dbReference>
<dbReference type="GO" id="GO:0005886">
    <property type="term" value="C:plasma membrane"/>
    <property type="evidence" value="ECO:0007669"/>
    <property type="project" value="UniProtKB-SubCell"/>
</dbReference>
<dbReference type="GO" id="GO:0004930">
    <property type="term" value="F:G protein-coupled receptor activity"/>
    <property type="evidence" value="ECO:0007669"/>
    <property type="project" value="UniProtKB-KW"/>
</dbReference>
<dbReference type="GO" id="GO:0004888">
    <property type="term" value="F:transmembrane signaling receptor activity"/>
    <property type="evidence" value="ECO:0000304"/>
    <property type="project" value="ProtInc"/>
</dbReference>
<dbReference type="GO" id="GO:0007166">
    <property type="term" value="P:cell surface receptor signaling pathway"/>
    <property type="evidence" value="ECO:0000304"/>
    <property type="project" value="ProtInc"/>
</dbReference>
<dbReference type="CDD" id="cd14988">
    <property type="entry name" value="7tmA_GPR182"/>
    <property type="match status" value="1"/>
</dbReference>
<dbReference type="FunFam" id="1.20.1070.10:FF:000141">
    <property type="entry name" value="atypical chemokine receptor 3"/>
    <property type="match status" value="1"/>
</dbReference>
<dbReference type="Gene3D" id="1.20.1070.10">
    <property type="entry name" value="Rhodopsin 7-helix transmembrane proteins"/>
    <property type="match status" value="1"/>
</dbReference>
<dbReference type="InterPro" id="IPR001350">
    <property type="entry name" value="G10D_rcpt"/>
</dbReference>
<dbReference type="InterPro" id="IPR000276">
    <property type="entry name" value="GPCR_Rhodpsn"/>
</dbReference>
<dbReference type="InterPro" id="IPR017452">
    <property type="entry name" value="GPCR_Rhodpsn_7TM"/>
</dbReference>
<dbReference type="InterPro" id="IPR047143">
    <property type="entry name" value="GPER1-like"/>
</dbReference>
<dbReference type="PANTHER" id="PTHR24226:SF0">
    <property type="entry name" value="G-PROTEIN COUPLED RECEPTOR 182"/>
    <property type="match status" value="1"/>
</dbReference>
<dbReference type="PANTHER" id="PTHR24226">
    <property type="entry name" value="G-PROTEIN COUPLED RECEPTOR 182 AND ESTROGEN RECEPTOR 1"/>
    <property type="match status" value="1"/>
</dbReference>
<dbReference type="Pfam" id="PF00001">
    <property type="entry name" value="7tm_1"/>
    <property type="match status" value="1"/>
</dbReference>
<dbReference type="PRINTS" id="PR00643">
    <property type="entry name" value="G10DORPHANR"/>
</dbReference>
<dbReference type="PRINTS" id="PR00237">
    <property type="entry name" value="GPCRRHODOPSN"/>
</dbReference>
<dbReference type="SUPFAM" id="SSF81321">
    <property type="entry name" value="Family A G protein-coupled receptor-like"/>
    <property type="match status" value="1"/>
</dbReference>
<dbReference type="PROSITE" id="PS00237">
    <property type="entry name" value="G_PROTEIN_RECEP_F1_1"/>
    <property type="match status" value="1"/>
</dbReference>
<dbReference type="PROSITE" id="PS50262">
    <property type="entry name" value="G_PROTEIN_RECEP_F1_2"/>
    <property type="match status" value="1"/>
</dbReference>
<name>GP182_HUMAN</name>
<protein>
    <recommendedName>
        <fullName>G-protein coupled receptor 182</fullName>
    </recommendedName>
</protein>
<sequence>MSVKPSWGPGPSEGVTAVPTSDLGEIHNWTELLDLFNHTLSECHVELSQSTKRVVLFALYLAMFVVGLVENLLVICVNWRGSGRAGLMNLYILNMAIADLGIVLSLPVWMLEVTLDYTWLWGSFSCRFTHYFYFVNMYSSIFFLVCLSVDRYVTLTSASPSWQRYQHRVRRAMCAGIWVLSAIIPLPEVVHIQLVEGPEPMCLFMAPFETYSTWALAVALSTTILGFLLPFPLITVFNVLTACRLRQPGQPKSRRHCLLLCAYVAVFVMCWLPYHVTLLLLTLHGTHISLHCHLVHLLYFFYDVIDCFSMLHCVINPILYNFLSPHFRGRLLNAVVHYLPKDQTKAGTCASSSSCSTQHSIIITKGDSQPAAAAPHPEPSLSFQAHHLLPNTSPISPTQPLTPS</sequence>
<proteinExistence type="evidence at protein level"/>
<gene>
    <name type="primary">GPR182</name>
    <name type="synonym">ADMR</name>
</gene>
<evidence type="ECO:0000255" key="1"/>
<evidence type="ECO:0000255" key="2">
    <source>
        <dbReference type="PROSITE-ProRule" id="PRU00521"/>
    </source>
</evidence>
<evidence type="ECO:0000269" key="3">
    <source>
    </source>
</evidence>
<evidence type="ECO:0000305" key="4">
    <source>
    </source>
</evidence>
<keyword id="KW-1003">Cell membrane</keyword>
<keyword id="KW-1015">Disulfide bond</keyword>
<keyword id="KW-0297">G-protein coupled receptor</keyword>
<keyword id="KW-0325">Glycoprotein</keyword>
<keyword id="KW-0472">Membrane</keyword>
<keyword id="KW-1267">Proteomics identification</keyword>
<keyword id="KW-0675">Receptor</keyword>
<keyword id="KW-1185">Reference proteome</keyword>
<keyword id="KW-0807">Transducer</keyword>
<keyword id="KW-0812">Transmembrane</keyword>
<keyword id="KW-1133">Transmembrane helix</keyword>
<feature type="chain" id="PRO_0000069112" description="G-protein coupled receptor 182">
    <location>
        <begin position="1"/>
        <end position="404"/>
    </location>
</feature>
<feature type="topological domain" description="Extracellular" evidence="1">
    <location>
        <begin position="1"/>
        <end position="57"/>
    </location>
</feature>
<feature type="transmembrane region" description="Helical; Name=1" evidence="1">
    <location>
        <begin position="58"/>
        <end position="79"/>
    </location>
</feature>
<feature type="topological domain" description="Cytoplasmic" evidence="1">
    <location>
        <begin position="80"/>
        <end position="90"/>
    </location>
</feature>
<feature type="transmembrane region" description="Helical; Name=2" evidence="1">
    <location>
        <begin position="91"/>
        <end position="113"/>
    </location>
</feature>
<feature type="topological domain" description="Extracellular" evidence="1">
    <location>
        <begin position="114"/>
        <end position="127"/>
    </location>
</feature>
<feature type="transmembrane region" description="Helical; Name=3" evidence="1">
    <location>
        <begin position="128"/>
        <end position="149"/>
    </location>
</feature>
<feature type="topological domain" description="Cytoplasmic" evidence="1">
    <location>
        <begin position="150"/>
        <end position="170"/>
    </location>
</feature>
<feature type="transmembrane region" description="Helical; Name=4" evidence="1">
    <location>
        <begin position="171"/>
        <end position="193"/>
    </location>
</feature>
<feature type="topological domain" description="Extracellular" evidence="1">
    <location>
        <begin position="194"/>
        <end position="217"/>
    </location>
</feature>
<feature type="transmembrane region" description="Helical; Name=5" evidence="1">
    <location>
        <begin position="218"/>
        <end position="239"/>
    </location>
</feature>
<feature type="topological domain" description="Cytoplasmic" evidence="1">
    <location>
        <begin position="240"/>
        <end position="258"/>
    </location>
</feature>
<feature type="transmembrane region" description="Helical; Name=6" evidence="1">
    <location>
        <begin position="259"/>
        <end position="280"/>
    </location>
</feature>
<feature type="topological domain" description="Extracellular" evidence="1">
    <location>
        <begin position="281"/>
        <end position="299"/>
    </location>
</feature>
<feature type="transmembrane region" description="Helical; Name=7" evidence="1">
    <location>
        <begin position="300"/>
        <end position="320"/>
    </location>
</feature>
<feature type="topological domain" description="Cytoplasmic" evidence="1">
    <location>
        <begin position="321"/>
        <end position="404"/>
    </location>
</feature>
<feature type="glycosylation site" description="N-linked (GlcNAc...) asparagine" evidence="1">
    <location>
        <position position="28"/>
    </location>
</feature>
<feature type="glycosylation site" description="N-linked (GlcNAc...) asparagine" evidence="1">
    <location>
        <position position="37"/>
    </location>
</feature>
<feature type="disulfide bond" evidence="2">
    <location>
        <begin position="126"/>
        <end position="202"/>
    </location>
</feature>
<feature type="sequence variant" id="VAR_033464" description="In dbSNP:rs35493121.">
    <original>C</original>
    <variation>R</variation>
    <location>
        <position position="349"/>
    </location>
</feature>